<feature type="chain" id="PRO_0000322439" description="Chorismate synthase">
    <location>
        <begin position="1"/>
        <end position="355"/>
    </location>
</feature>
<feature type="binding site" evidence="1">
    <location>
        <position position="44"/>
    </location>
    <ligand>
        <name>NADP(+)</name>
        <dbReference type="ChEBI" id="CHEBI:58349"/>
    </ligand>
</feature>
<feature type="binding site" evidence="1">
    <location>
        <position position="49"/>
    </location>
    <ligand>
        <name>NADP(+)</name>
        <dbReference type="ChEBI" id="CHEBI:58349"/>
    </ligand>
</feature>
<feature type="binding site" evidence="1">
    <location>
        <begin position="121"/>
        <end position="123"/>
    </location>
    <ligand>
        <name>FMN</name>
        <dbReference type="ChEBI" id="CHEBI:58210"/>
    </ligand>
</feature>
<feature type="binding site" evidence="1">
    <location>
        <position position="277"/>
    </location>
    <ligand>
        <name>FMN</name>
        <dbReference type="ChEBI" id="CHEBI:58210"/>
    </ligand>
</feature>
<feature type="binding site" evidence="1">
    <location>
        <begin position="292"/>
        <end position="296"/>
    </location>
    <ligand>
        <name>FMN</name>
        <dbReference type="ChEBI" id="CHEBI:58210"/>
    </ligand>
</feature>
<feature type="binding site" evidence="1">
    <location>
        <position position="319"/>
    </location>
    <ligand>
        <name>FMN</name>
        <dbReference type="ChEBI" id="CHEBI:58210"/>
    </ligand>
</feature>
<organism>
    <name type="scientific">Thermococcus kodakarensis (strain ATCC BAA-918 / JCM 12380 / KOD1)</name>
    <name type="common">Pyrococcus kodakaraensis (strain KOD1)</name>
    <dbReference type="NCBI Taxonomy" id="69014"/>
    <lineage>
        <taxon>Archaea</taxon>
        <taxon>Methanobacteriati</taxon>
        <taxon>Methanobacteriota</taxon>
        <taxon>Thermococci</taxon>
        <taxon>Thermococcales</taxon>
        <taxon>Thermococcaceae</taxon>
        <taxon>Thermococcus</taxon>
    </lineage>
</organism>
<sequence>MRGKLLSFSLFGESHGKAVGVLVEGLPPGIEVSVEELKRELERRKGIERFATKRKETDEPKILSGVFRGRTTGTPVAVIVENRDVDSSYYEEIRNTPRPGHADYPAGIKYFGYNDYRGGGHFSGRLTVGVVIAGYFAKKLLEREGIKVRAYLKRIGRVEAHVSPEELLSSENPYCPDEGAFEAMVEEMERARKAGDSVGGIVEAVAFNVPPGLGGPWEEDIEADIASALFRIPAVKGVEFGLGFGLAELRGSQANDPFVLKDGKVVTETNNHGGVLGGMTTGMPLVVRAAFKPTPSIYLPQRTVDLGRMEEVTLKLRGRFDSCIVPKALPVVESSVAFVIADHLLRRRAWEGMVR</sequence>
<gene>
    <name evidence="1" type="primary">aroC</name>
    <name type="ordered locus">TK0262</name>
</gene>
<name>AROC_THEKO</name>
<comment type="function">
    <text evidence="1">Catalyzes the anti-1,4-elimination of the C-3 phosphate and the C-6 proR hydrogen from 5-enolpyruvylshikimate-3-phosphate (EPSP) to yield chorismate, which is the branch point compound that serves as the starting substrate for the three terminal pathways of aromatic amino acid biosynthesis. This reaction introduces a second double bond into the aromatic ring system.</text>
</comment>
<comment type="catalytic activity">
    <reaction evidence="1">
        <text>5-O-(1-carboxyvinyl)-3-phosphoshikimate = chorismate + phosphate</text>
        <dbReference type="Rhea" id="RHEA:21020"/>
        <dbReference type="ChEBI" id="CHEBI:29748"/>
        <dbReference type="ChEBI" id="CHEBI:43474"/>
        <dbReference type="ChEBI" id="CHEBI:57701"/>
        <dbReference type="EC" id="4.2.3.5"/>
    </reaction>
</comment>
<comment type="cofactor">
    <cofactor evidence="1">
        <name>FMNH2</name>
        <dbReference type="ChEBI" id="CHEBI:57618"/>
    </cofactor>
    <text evidence="1">Reduced FMN (FMNH(2)).</text>
</comment>
<comment type="pathway">
    <text evidence="1">Metabolic intermediate biosynthesis; chorismate biosynthesis; chorismate from D-erythrose 4-phosphate and phosphoenolpyruvate: step 7/7.</text>
</comment>
<comment type="similarity">
    <text evidence="1">Belongs to the chorismate synthase family.</text>
</comment>
<keyword id="KW-0028">Amino-acid biosynthesis</keyword>
<keyword id="KW-0057">Aromatic amino acid biosynthesis</keyword>
<keyword id="KW-0274">FAD</keyword>
<keyword id="KW-0285">Flavoprotein</keyword>
<keyword id="KW-0288">FMN</keyword>
<keyword id="KW-0456">Lyase</keyword>
<keyword id="KW-0521">NADP</keyword>
<keyword id="KW-1185">Reference proteome</keyword>
<protein>
    <recommendedName>
        <fullName evidence="1">Chorismate synthase</fullName>
        <shortName evidence="1">CS</shortName>
        <ecNumber evidence="1">4.2.3.5</ecNumber>
    </recommendedName>
    <alternativeName>
        <fullName evidence="1">5-enolpyruvylshikimate-3-phosphate phospholyase</fullName>
    </alternativeName>
</protein>
<accession>Q5JFT4</accession>
<proteinExistence type="inferred from homology"/>
<dbReference type="EC" id="4.2.3.5" evidence="1"/>
<dbReference type="EMBL" id="AP006878">
    <property type="protein sequence ID" value="BAD84451.1"/>
    <property type="molecule type" value="Genomic_DNA"/>
</dbReference>
<dbReference type="RefSeq" id="WP_011249217.1">
    <property type="nucleotide sequence ID" value="NC_006624.1"/>
</dbReference>
<dbReference type="SMR" id="Q5JFT4"/>
<dbReference type="FunCoup" id="Q5JFT4">
    <property type="interactions" value="137"/>
</dbReference>
<dbReference type="STRING" id="69014.TK0262"/>
<dbReference type="EnsemblBacteria" id="BAD84451">
    <property type="protein sequence ID" value="BAD84451"/>
    <property type="gene ID" value="TK0262"/>
</dbReference>
<dbReference type="GeneID" id="78446765"/>
<dbReference type="KEGG" id="tko:TK0262"/>
<dbReference type="PATRIC" id="fig|69014.16.peg.261"/>
<dbReference type="eggNOG" id="arCOG04133">
    <property type="taxonomic scope" value="Archaea"/>
</dbReference>
<dbReference type="HOGENOM" id="CLU_034547_0_0_2"/>
<dbReference type="InParanoid" id="Q5JFT4"/>
<dbReference type="OrthoDB" id="33049at2157"/>
<dbReference type="PhylomeDB" id="Q5JFT4"/>
<dbReference type="UniPathway" id="UPA00053">
    <property type="reaction ID" value="UER00090"/>
</dbReference>
<dbReference type="Proteomes" id="UP000000536">
    <property type="component" value="Chromosome"/>
</dbReference>
<dbReference type="GO" id="GO:0005829">
    <property type="term" value="C:cytosol"/>
    <property type="evidence" value="ECO:0000318"/>
    <property type="project" value="GO_Central"/>
</dbReference>
<dbReference type="GO" id="GO:0004107">
    <property type="term" value="F:chorismate synthase activity"/>
    <property type="evidence" value="ECO:0000318"/>
    <property type="project" value="GO_Central"/>
</dbReference>
<dbReference type="GO" id="GO:0010181">
    <property type="term" value="F:FMN binding"/>
    <property type="evidence" value="ECO:0000318"/>
    <property type="project" value="GO_Central"/>
</dbReference>
<dbReference type="GO" id="GO:0008652">
    <property type="term" value="P:amino acid biosynthetic process"/>
    <property type="evidence" value="ECO:0007669"/>
    <property type="project" value="UniProtKB-KW"/>
</dbReference>
<dbReference type="GO" id="GO:0009073">
    <property type="term" value="P:aromatic amino acid family biosynthetic process"/>
    <property type="evidence" value="ECO:0000318"/>
    <property type="project" value="GO_Central"/>
</dbReference>
<dbReference type="GO" id="GO:0009423">
    <property type="term" value="P:chorismate biosynthetic process"/>
    <property type="evidence" value="ECO:0000318"/>
    <property type="project" value="GO_Central"/>
</dbReference>
<dbReference type="CDD" id="cd07304">
    <property type="entry name" value="Chorismate_synthase"/>
    <property type="match status" value="1"/>
</dbReference>
<dbReference type="FunFam" id="3.60.150.10:FF:000002">
    <property type="entry name" value="Chorismate synthase"/>
    <property type="match status" value="1"/>
</dbReference>
<dbReference type="Gene3D" id="3.60.150.10">
    <property type="entry name" value="Chorismate synthase AroC"/>
    <property type="match status" value="1"/>
</dbReference>
<dbReference type="HAMAP" id="MF_00300">
    <property type="entry name" value="Chorismate_synth"/>
    <property type="match status" value="1"/>
</dbReference>
<dbReference type="InterPro" id="IPR000453">
    <property type="entry name" value="Chorismate_synth"/>
</dbReference>
<dbReference type="InterPro" id="IPR035904">
    <property type="entry name" value="Chorismate_synth_AroC_sf"/>
</dbReference>
<dbReference type="InterPro" id="IPR020541">
    <property type="entry name" value="Chorismate_synthase_CS"/>
</dbReference>
<dbReference type="NCBIfam" id="TIGR00033">
    <property type="entry name" value="aroC"/>
    <property type="match status" value="1"/>
</dbReference>
<dbReference type="NCBIfam" id="NF003793">
    <property type="entry name" value="PRK05382.1"/>
    <property type="match status" value="1"/>
</dbReference>
<dbReference type="PANTHER" id="PTHR21085">
    <property type="entry name" value="CHORISMATE SYNTHASE"/>
    <property type="match status" value="1"/>
</dbReference>
<dbReference type="PANTHER" id="PTHR21085:SF0">
    <property type="entry name" value="CHORISMATE SYNTHASE"/>
    <property type="match status" value="1"/>
</dbReference>
<dbReference type="Pfam" id="PF01264">
    <property type="entry name" value="Chorismate_synt"/>
    <property type="match status" value="1"/>
</dbReference>
<dbReference type="PIRSF" id="PIRSF001456">
    <property type="entry name" value="Chorismate_synth"/>
    <property type="match status" value="1"/>
</dbReference>
<dbReference type="SUPFAM" id="SSF103263">
    <property type="entry name" value="Chorismate synthase, AroC"/>
    <property type="match status" value="1"/>
</dbReference>
<dbReference type="PROSITE" id="PS00787">
    <property type="entry name" value="CHORISMATE_SYNTHASE_1"/>
    <property type="match status" value="1"/>
</dbReference>
<dbReference type="PROSITE" id="PS00788">
    <property type="entry name" value="CHORISMATE_SYNTHASE_2"/>
    <property type="match status" value="1"/>
</dbReference>
<evidence type="ECO:0000255" key="1">
    <source>
        <dbReference type="HAMAP-Rule" id="MF_00300"/>
    </source>
</evidence>
<reference key="1">
    <citation type="journal article" date="2005" name="Genome Res.">
        <title>Complete genome sequence of the hyperthermophilic archaeon Thermococcus kodakaraensis KOD1 and comparison with Pyrococcus genomes.</title>
        <authorList>
            <person name="Fukui T."/>
            <person name="Atomi H."/>
            <person name="Kanai T."/>
            <person name="Matsumi R."/>
            <person name="Fujiwara S."/>
            <person name="Imanaka T."/>
        </authorList>
    </citation>
    <scope>NUCLEOTIDE SEQUENCE [LARGE SCALE GENOMIC DNA]</scope>
    <source>
        <strain>ATCC BAA-918 / JCM 12380 / KOD1</strain>
    </source>
</reference>